<evidence type="ECO:0000255" key="1">
    <source>
        <dbReference type="HAMAP-Rule" id="MF_00215"/>
    </source>
</evidence>
<proteinExistence type="inferred from homology"/>
<reference key="1">
    <citation type="journal article" date="2009" name="PLoS Genet.">
        <title>Organised genome dynamics in the Escherichia coli species results in highly diverse adaptive paths.</title>
        <authorList>
            <person name="Touchon M."/>
            <person name="Hoede C."/>
            <person name="Tenaillon O."/>
            <person name="Barbe V."/>
            <person name="Baeriswyl S."/>
            <person name="Bidet P."/>
            <person name="Bingen E."/>
            <person name="Bonacorsi S."/>
            <person name="Bouchier C."/>
            <person name="Bouvet O."/>
            <person name="Calteau A."/>
            <person name="Chiapello H."/>
            <person name="Clermont O."/>
            <person name="Cruveiller S."/>
            <person name="Danchin A."/>
            <person name="Diard M."/>
            <person name="Dossat C."/>
            <person name="Karoui M.E."/>
            <person name="Frapy E."/>
            <person name="Garry L."/>
            <person name="Ghigo J.M."/>
            <person name="Gilles A.M."/>
            <person name="Johnson J."/>
            <person name="Le Bouguenec C."/>
            <person name="Lescat M."/>
            <person name="Mangenot S."/>
            <person name="Martinez-Jehanne V."/>
            <person name="Matic I."/>
            <person name="Nassif X."/>
            <person name="Oztas S."/>
            <person name="Petit M.A."/>
            <person name="Pichon C."/>
            <person name="Rouy Z."/>
            <person name="Ruf C.S."/>
            <person name="Schneider D."/>
            <person name="Tourret J."/>
            <person name="Vacherie B."/>
            <person name="Vallenet D."/>
            <person name="Medigue C."/>
            <person name="Rocha E.P.C."/>
            <person name="Denamur E."/>
        </authorList>
    </citation>
    <scope>NUCLEOTIDE SEQUENCE [LARGE SCALE GENOMIC DNA]</scope>
    <source>
        <strain>ED1a</strain>
    </source>
</reference>
<comment type="catalytic activity">
    <reaction evidence="1">
        <text>(R)-pantothenate + ATP = (R)-4'-phosphopantothenate + ADP + H(+)</text>
        <dbReference type="Rhea" id="RHEA:16373"/>
        <dbReference type="ChEBI" id="CHEBI:10986"/>
        <dbReference type="ChEBI" id="CHEBI:15378"/>
        <dbReference type="ChEBI" id="CHEBI:29032"/>
        <dbReference type="ChEBI" id="CHEBI:30616"/>
        <dbReference type="ChEBI" id="CHEBI:456216"/>
        <dbReference type="EC" id="2.7.1.33"/>
    </reaction>
</comment>
<comment type="pathway">
    <text evidence="1">Cofactor biosynthesis; coenzyme A biosynthesis; CoA from (R)-pantothenate: step 1/5.</text>
</comment>
<comment type="subcellular location">
    <subcellularLocation>
        <location evidence="1">Cytoplasm</location>
    </subcellularLocation>
</comment>
<comment type="similarity">
    <text evidence="1">Belongs to the prokaryotic pantothenate kinase family.</text>
</comment>
<feature type="chain" id="PRO_1000124799" description="Pantothenate kinase">
    <location>
        <begin position="1"/>
        <end position="316"/>
    </location>
</feature>
<feature type="binding site" evidence="1">
    <location>
        <begin position="95"/>
        <end position="102"/>
    </location>
    <ligand>
        <name>ATP</name>
        <dbReference type="ChEBI" id="CHEBI:30616"/>
    </ligand>
</feature>
<sequence>MSIKEQTLMTPYLQFDRNQWAALRDSVPMTLSEDEIARLKGINEDLSLEEVAEIYLPLSRLLNFYISSNLRRQAVLEQFLGTNGQRIPYIISIAGSVAVGKSTTARVLQALLSRWPEHRRVELITTDGFLHPNQVLKERGLMKKKGFPESYDMHRLVKFVSDLKSGVPNVTAPVYSHLIYDVIPDGDKTVVQPDILILEGLNVLQSGMDYPHDPHHVFVSDFVDFSIYVDAPEDLLQTWYINRFLKFREGAFTDPDSYFHNYAKLTKEEAIKTAMTLWKEINWLNLKQNILPTRERASLILTKSANHAVEEVRLRK</sequence>
<keyword id="KW-0067">ATP-binding</keyword>
<keyword id="KW-0173">Coenzyme A biosynthesis</keyword>
<keyword id="KW-0963">Cytoplasm</keyword>
<keyword id="KW-0418">Kinase</keyword>
<keyword id="KW-0547">Nucleotide-binding</keyword>
<keyword id="KW-0808">Transferase</keyword>
<name>COAA_ECO81</name>
<gene>
    <name evidence="1" type="primary">coaA</name>
    <name type="ordered locus">ECED1_4685</name>
</gene>
<organism>
    <name type="scientific">Escherichia coli O81 (strain ED1a)</name>
    <dbReference type="NCBI Taxonomy" id="585397"/>
    <lineage>
        <taxon>Bacteria</taxon>
        <taxon>Pseudomonadati</taxon>
        <taxon>Pseudomonadota</taxon>
        <taxon>Gammaproteobacteria</taxon>
        <taxon>Enterobacterales</taxon>
        <taxon>Enterobacteriaceae</taxon>
        <taxon>Escherichia</taxon>
    </lineage>
</organism>
<dbReference type="EC" id="2.7.1.33" evidence="1"/>
<dbReference type="EMBL" id="CU928162">
    <property type="protein sequence ID" value="CAR10650.1"/>
    <property type="molecule type" value="Genomic_DNA"/>
</dbReference>
<dbReference type="RefSeq" id="WP_000023081.1">
    <property type="nucleotide sequence ID" value="NC_011745.1"/>
</dbReference>
<dbReference type="SMR" id="B7MR65"/>
<dbReference type="GeneID" id="93777919"/>
<dbReference type="KEGG" id="ecq:ECED1_4685"/>
<dbReference type="HOGENOM" id="CLU_053818_1_1_6"/>
<dbReference type="UniPathway" id="UPA00241">
    <property type="reaction ID" value="UER00352"/>
</dbReference>
<dbReference type="Proteomes" id="UP000000748">
    <property type="component" value="Chromosome"/>
</dbReference>
<dbReference type="GO" id="GO:0005737">
    <property type="term" value="C:cytoplasm"/>
    <property type="evidence" value="ECO:0007669"/>
    <property type="project" value="UniProtKB-SubCell"/>
</dbReference>
<dbReference type="GO" id="GO:0005524">
    <property type="term" value="F:ATP binding"/>
    <property type="evidence" value="ECO:0007669"/>
    <property type="project" value="UniProtKB-UniRule"/>
</dbReference>
<dbReference type="GO" id="GO:0004594">
    <property type="term" value="F:pantothenate kinase activity"/>
    <property type="evidence" value="ECO:0007669"/>
    <property type="project" value="UniProtKB-UniRule"/>
</dbReference>
<dbReference type="GO" id="GO:0015937">
    <property type="term" value="P:coenzyme A biosynthetic process"/>
    <property type="evidence" value="ECO:0007669"/>
    <property type="project" value="UniProtKB-UniRule"/>
</dbReference>
<dbReference type="CDD" id="cd02025">
    <property type="entry name" value="PanK"/>
    <property type="match status" value="1"/>
</dbReference>
<dbReference type="FunFam" id="3.40.50.300:FF:000242">
    <property type="entry name" value="Pantothenate kinase"/>
    <property type="match status" value="1"/>
</dbReference>
<dbReference type="Gene3D" id="3.40.50.300">
    <property type="entry name" value="P-loop containing nucleotide triphosphate hydrolases"/>
    <property type="match status" value="1"/>
</dbReference>
<dbReference type="HAMAP" id="MF_00215">
    <property type="entry name" value="Pantothen_kinase_1"/>
    <property type="match status" value="1"/>
</dbReference>
<dbReference type="InterPro" id="IPR027417">
    <property type="entry name" value="P-loop_NTPase"/>
</dbReference>
<dbReference type="InterPro" id="IPR004566">
    <property type="entry name" value="PanK"/>
</dbReference>
<dbReference type="InterPro" id="IPR006083">
    <property type="entry name" value="PRK/URK"/>
</dbReference>
<dbReference type="NCBIfam" id="TIGR00554">
    <property type="entry name" value="panK_bact"/>
    <property type="match status" value="1"/>
</dbReference>
<dbReference type="PANTHER" id="PTHR10285">
    <property type="entry name" value="URIDINE KINASE"/>
    <property type="match status" value="1"/>
</dbReference>
<dbReference type="Pfam" id="PF00485">
    <property type="entry name" value="PRK"/>
    <property type="match status" value="1"/>
</dbReference>
<dbReference type="PIRSF" id="PIRSF000545">
    <property type="entry name" value="Pantothenate_kin"/>
    <property type="match status" value="1"/>
</dbReference>
<dbReference type="SUPFAM" id="SSF52540">
    <property type="entry name" value="P-loop containing nucleoside triphosphate hydrolases"/>
    <property type="match status" value="1"/>
</dbReference>
<accession>B7MR65</accession>
<protein>
    <recommendedName>
        <fullName evidence="1">Pantothenate kinase</fullName>
        <ecNumber evidence="1">2.7.1.33</ecNumber>
    </recommendedName>
    <alternativeName>
        <fullName evidence="1">Pantothenic acid kinase</fullName>
    </alternativeName>
</protein>